<evidence type="ECO:0000255" key="1">
    <source>
        <dbReference type="HAMAP-Rule" id="MF_00402"/>
    </source>
</evidence>
<evidence type="ECO:0000305" key="2"/>
<accession>A4FME7</accession>
<comment type="function">
    <text evidence="1">This protein is located at the 30S-50S ribosomal subunit interface and may play a role in the structure and function of the aminoacyl-tRNA binding site.</text>
</comment>
<comment type="similarity">
    <text evidence="1">Belongs to the bacterial ribosomal protein bL19 family.</text>
</comment>
<organism>
    <name type="scientific">Saccharopolyspora erythraea (strain ATCC 11635 / DSM 40517 / JCM 4748 / NBRC 13426 / NCIMB 8594 / NRRL 2338)</name>
    <dbReference type="NCBI Taxonomy" id="405948"/>
    <lineage>
        <taxon>Bacteria</taxon>
        <taxon>Bacillati</taxon>
        <taxon>Actinomycetota</taxon>
        <taxon>Actinomycetes</taxon>
        <taxon>Pseudonocardiales</taxon>
        <taxon>Pseudonocardiaceae</taxon>
        <taxon>Saccharopolyspora</taxon>
    </lineage>
</organism>
<proteinExistence type="inferred from homology"/>
<name>RL19_SACEN</name>
<protein>
    <recommendedName>
        <fullName evidence="1">Large ribosomal subunit protein bL19</fullName>
    </recommendedName>
    <alternativeName>
        <fullName evidence="2">50S ribosomal protein L19</fullName>
    </alternativeName>
</protein>
<feature type="chain" id="PRO_1000049736" description="Large ribosomal subunit protein bL19">
    <location>
        <begin position="1"/>
        <end position="119"/>
    </location>
</feature>
<reference key="1">
    <citation type="journal article" date="2007" name="Nat. Biotechnol.">
        <title>Complete genome sequence of the erythromycin-producing bacterium Saccharopolyspora erythraea NRRL23338.</title>
        <authorList>
            <person name="Oliynyk M."/>
            <person name="Samborskyy M."/>
            <person name="Lester J.B."/>
            <person name="Mironenko T."/>
            <person name="Scott N."/>
            <person name="Dickens S."/>
            <person name="Haydock S.F."/>
            <person name="Leadlay P.F."/>
        </authorList>
    </citation>
    <scope>NUCLEOTIDE SEQUENCE [LARGE SCALE GENOMIC DNA]</scope>
    <source>
        <strain>ATCC 11635 / DSM 40517 / JCM 4748 / NBRC 13426 / NCIMB 8594 / NRRL 2338</strain>
    </source>
</reference>
<gene>
    <name evidence="1" type="primary">rplS</name>
    <name type="ordered locus">SACE_6049</name>
</gene>
<keyword id="KW-1185">Reference proteome</keyword>
<keyword id="KW-0687">Ribonucleoprotein</keyword>
<keyword id="KW-0689">Ribosomal protein</keyword>
<sequence length="119" mass="13315">MNTLDALDAQSLRSDIPAFRPGDTLKVHVRVIEGSRERNQVFQGVVIRRQGGGVRETFTVRKVSFGVGVERTFPVHSPNIAKVEVATRGDVRRAKLYYLRELRGKAAKIKEKRETAPAS</sequence>
<dbReference type="EMBL" id="AM420293">
    <property type="protein sequence ID" value="CAM05222.1"/>
    <property type="molecule type" value="Genomic_DNA"/>
</dbReference>
<dbReference type="RefSeq" id="WP_009943621.1">
    <property type="nucleotide sequence ID" value="NC_009142.1"/>
</dbReference>
<dbReference type="SMR" id="A4FME7"/>
<dbReference type="STRING" id="405948.SACE_6049"/>
<dbReference type="KEGG" id="sen:SACE_6049"/>
<dbReference type="eggNOG" id="COG0335">
    <property type="taxonomic scope" value="Bacteria"/>
</dbReference>
<dbReference type="HOGENOM" id="CLU_103507_2_1_11"/>
<dbReference type="OrthoDB" id="9803541at2"/>
<dbReference type="Proteomes" id="UP000006728">
    <property type="component" value="Chromosome"/>
</dbReference>
<dbReference type="GO" id="GO:0022625">
    <property type="term" value="C:cytosolic large ribosomal subunit"/>
    <property type="evidence" value="ECO:0007669"/>
    <property type="project" value="TreeGrafter"/>
</dbReference>
<dbReference type="GO" id="GO:0003735">
    <property type="term" value="F:structural constituent of ribosome"/>
    <property type="evidence" value="ECO:0007669"/>
    <property type="project" value="InterPro"/>
</dbReference>
<dbReference type="GO" id="GO:0006412">
    <property type="term" value="P:translation"/>
    <property type="evidence" value="ECO:0007669"/>
    <property type="project" value="UniProtKB-UniRule"/>
</dbReference>
<dbReference type="FunFam" id="2.30.30.790:FF:000001">
    <property type="entry name" value="50S ribosomal protein L19"/>
    <property type="match status" value="1"/>
</dbReference>
<dbReference type="Gene3D" id="2.30.30.790">
    <property type="match status" value="1"/>
</dbReference>
<dbReference type="HAMAP" id="MF_00402">
    <property type="entry name" value="Ribosomal_bL19"/>
    <property type="match status" value="1"/>
</dbReference>
<dbReference type="InterPro" id="IPR001857">
    <property type="entry name" value="Ribosomal_bL19"/>
</dbReference>
<dbReference type="InterPro" id="IPR018257">
    <property type="entry name" value="Ribosomal_bL19_CS"/>
</dbReference>
<dbReference type="InterPro" id="IPR038657">
    <property type="entry name" value="Ribosomal_bL19_sf"/>
</dbReference>
<dbReference type="InterPro" id="IPR008991">
    <property type="entry name" value="Translation_prot_SH3-like_sf"/>
</dbReference>
<dbReference type="NCBIfam" id="TIGR01024">
    <property type="entry name" value="rplS_bact"/>
    <property type="match status" value="1"/>
</dbReference>
<dbReference type="PANTHER" id="PTHR15680:SF9">
    <property type="entry name" value="LARGE RIBOSOMAL SUBUNIT PROTEIN BL19M"/>
    <property type="match status" value="1"/>
</dbReference>
<dbReference type="PANTHER" id="PTHR15680">
    <property type="entry name" value="RIBOSOMAL PROTEIN L19"/>
    <property type="match status" value="1"/>
</dbReference>
<dbReference type="Pfam" id="PF01245">
    <property type="entry name" value="Ribosomal_L19"/>
    <property type="match status" value="1"/>
</dbReference>
<dbReference type="PIRSF" id="PIRSF002191">
    <property type="entry name" value="Ribosomal_L19"/>
    <property type="match status" value="1"/>
</dbReference>
<dbReference type="PRINTS" id="PR00061">
    <property type="entry name" value="RIBOSOMALL19"/>
</dbReference>
<dbReference type="SUPFAM" id="SSF50104">
    <property type="entry name" value="Translation proteins SH3-like domain"/>
    <property type="match status" value="1"/>
</dbReference>
<dbReference type="PROSITE" id="PS01015">
    <property type="entry name" value="RIBOSOMAL_L19"/>
    <property type="match status" value="1"/>
</dbReference>